<evidence type="ECO:0000305" key="1"/>
<reference key="1">
    <citation type="journal article" date="1999" name="Nat. Med.">
        <title>Modulation of oncogenic potential by alternative gene use in human prostate cancer.</title>
        <authorList>
            <person name="Kadkol S.S."/>
            <person name="Brody J.R."/>
            <person name="Pevsner J."/>
            <person name="Bai J."/>
            <person name="Pasternack G.R."/>
        </authorList>
    </citation>
    <scope>NUCLEOTIDE SEQUENCE [GENOMIC DNA]</scope>
    <source>
        <tissue>Placenta</tissue>
    </source>
</reference>
<reference key="2">
    <citation type="journal article" date="1999" name="Nat. Med.">
        <authorList>
            <person name="Kadkol S.S."/>
            <person name="Brody J.R."/>
            <person name="Pevsner J."/>
            <person name="Bai J."/>
            <person name="Pasternack G.R."/>
        </authorList>
    </citation>
    <scope>ERRATUM OF PUBMED:10086381</scope>
</reference>
<reference key="3">
    <citation type="journal article" date="2004" name="Genome Res.">
        <title>The status, quality, and expansion of the NIH full-length cDNA project: the Mammalian Gene Collection (MGC).</title>
        <authorList>
            <consortium name="The MGC Project Team"/>
        </authorList>
    </citation>
    <scope>NUCLEOTIDE SEQUENCE [LARGE SCALE MRNA]</scope>
</reference>
<reference key="4">
    <citation type="journal article" date="2005" name="Cerebellum">
        <title>The Anp32 family of proteins containing leucine-rich repeats.</title>
        <authorList>
            <person name="Matilla A."/>
            <person name="Radrizzani M."/>
        </authorList>
    </citation>
    <scope>GENE FAMILY</scope>
    <scope>NOMENCLATURE</scope>
</reference>
<sequence length="131" mass="14806">MEMGKWIHLELRNRTPSDVKELFLDNSQSNEGKLEGLTDEFEELELLNTINIGLTSIANLPKLNKLKKLELSSNRASVGLEVLAEKCPNLIHLNLSGNKIKDLSTIEPLKKLENLESLDLFTCEVTNLNNY</sequence>
<gene>
    <name type="primary">ANP32D</name>
    <name type="synonym">PP32R2</name>
</gene>
<protein>
    <recommendedName>
        <fullName>Acidic leucine-rich nuclear phosphoprotein 32 family member D</fullName>
    </recommendedName>
    <alternativeName>
        <fullName>Phosphoprotein 32-related protein 2</fullName>
    </alternativeName>
    <alternativeName>
        <fullName>Tumorigenic protein pp32r2</fullName>
    </alternativeName>
</protein>
<accession>O95626</accession>
<accession>Q6NTC4</accession>
<dbReference type="EMBL" id="U71084">
    <property type="protein sequence ID" value="AAD13667.1"/>
    <property type="molecule type" value="Genomic_DNA"/>
</dbReference>
<dbReference type="EMBL" id="BC069122">
    <property type="protein sequence ID" value="AAH69122.1"/>
    <property type="molecule type" value="mRNA"/>
</dbReference>
<dbReference type="CCDS" id="CCDS31788.1"/>
<dbReference type="RefSeq" id="NP_036536.2">
    <property type="nucleotide sequence ID" value="NM_012404.2"/>
</dbReference>
<dbReference type="SMR" id="O95626"/>
<dbReference type="FunCoup" id="O95626">
    <property type="interactions" value="1"/>
</dbReference>
<dbReference type="STRING" id="9606.ENSP00000266594"/>
<dbReference type="iPTMnet" id="O95626"/>
<dbReference type="PhosphoSitePlus" id="O95626"/>
<dbReference type="BioMuta" id="ANP32D"/>
<dbReference type="jPOST" id="O95626"/>
<dbReference type="MassIVE" id="O95626"/>
<dbReference type="PaxDb" id="9606-ENSP00000266594"/>
<dbReference type="PeptideAtlas" id="O95626"/>
<dbReference type="ProteomicsDB" id="50957"/>
<dbReference type="Antibodypedia" id="74725">
    <property type="antibodies" value="57 antibodies from 14 providers"/>
</dbReference>
<dbReference type="DNASU" id="23519"/>
<dbReference type="Ensembl" id="ENST00000266594.4">
    <property type="protein sequence ID" value="ENSP00000266594.2"/>
    <property type="gene ID" value="ENSG00000139223.4"/>
</dbReference>
<dbReference type="GeneID" id="23519"/>
<dbReference type="KEGG" id="hsa:23519"/>
<dbReference type="MANE-Select" id="ENST00000266594.4">
    <property type="protein sequence ID" value="ENSP00000266594.2"/>
    <property type="RefSeq nucleotide sequence ID" value="NM_012404.3"/>
    <property type="RefSeq protein sequence ID" value="NP_036536.2"/>
</dbReference>
<dbReference type="UCSC" id="uc010slt.3">
    <property type="organism name" value="human"/>
</dbReference>
<dbReference type="AGR" id="HGNC:16676"/>
<dbReference type="CTD" id="23519"/>
<dbReference type="DisGeNET" id="23519"/>
<dbReference type="GeneCards" id="ANP32D"/>
<dbReference type="HGNC" id="HGNC:16676">
    <property type="gene designation" value="ANP32D"/>
</dbReference>
<dbReference type="HPA" id="ENSG00000139223">
    <property type="expression patterns" value="Not detected"/>
</dbReference>
<dbReference type="MIM" id="606878">
    <property type="type" value="gene"/>
</dbReference>
<dbReference type="neXtProt" id="NX_O95626"/>
<dbReference type="OpenTargets" id="ENSG00000139223"/>
<dbReference type="PharmGKB" id="PA24814"/>
<dbReference type="VEuPathDB" id="HostDB:ENSG00000139223"/>
<dbReference type="eggNOG" id="KOG2739">
    <property type="taxonomic scope" value="Eukaryota"/>
</dbReference>
<dbReference type="GeneTree" id="ENSGT00950000182907"/>
<dbReference type="HOGENOM" id="CLU_063314_3_1_1"/>
<dbReference type="InParanoid" id="O95626"/>
<dbReference type="OMA" id="CRSTNIA"/>
<dbReference type="OrthoDB" id="2160613at2759"/>
<dbReference type="PAN-GO" id="O95626">
    <property type="GO annotations" value="0 GO annotations based on evolutionary models"/>
</dbReference>
<dbReference type="PhylomeDB" id="O95626"/>
<dbReference type="TreeFam" id="TF317206"/>
<dbReference type="PathwayCommons" id="O95626"/>
<dbReference type="SignaLink" id="O95626"/>
<dbReference type="BioGRID-ORCS" id="23519">
    <property type="hits" value="8 hits in 1066 CRISPR screens"/>
</dbReference>
<dbReference type="GeneWiki" id="ANP32D"/>
<dbReference type="GenomeRNAi" id="23519"/>
<dbReference type="Pharos" id="O95626">
    <property type="development level" value="Tdark"/>
</dbReference>
<dbReference type="PRO" id="PR:O95626"/>
<dbReference type="Proteomes" id="UP000005640">
    <property type="component" value="Chromosome 12"/>
</dbReference>
<dbReference type="RNAct" id="O95626">
    <property type="molecule type" value="protein"/>
</dbReference>
<dbReference type="Bgee" id="ENSG00000139223">
    <property type="expression patterns" value="Expressed in sural nerve and 11 other cell types or tissues"/>
</dbReference>
<dbReference type="Gene3D" id="3.80.10.10">
    <property type="entry name" value="Ribonuclease Inhibitor"/>
    <property type="match status" value="1"/>
</dbReference>
<dbReference type="InterPro" id="IPR045081">
    <property type="entry name" value="AN32"/>
</dbReference>
<dbReference type="InterPro" id="IPR001611">
    <property type="entry name" value="Leu-rich_rpt"/>
</dbReference>
<dbReference type="InterPro" id="IPR032675">
    <property type="entry name" value="LRR_dom_sf"/>
</dbReference>
<dbReference type="PANTHER" id="PTHR11375">
    <property type="entry name" value="ACIDIC LEUCINE-RICH NUCLEAR PHOSPHOPROTEIN 32"/>
    <property type="match status" value="1"/>
</dbReference>
<dbReference type="PANTHER" id="PTHR11375:SF1">
    <property type="entry name" value="ACIDIC LEUCINE-RICH NUCLEAR PHOSPHOPROTEIN 32 FAMILY MEMBER A"/>
    <property type="match status" value="1"/>
</dbReference>
<dbReference type="Pfam" id="PF14580">
    <property type="entry name" value="LRR_9"/>
    <property type="match status" value="1"/>
</dbReference>
<dbReference type="SUPFAM" id="SSF52058">
    <property type="entry name" value="L domain-like"/>
    <property type="match status" value="1"/>
</dbReference>
<dbReference type="PROSITE" id="PS51450">
    <property type="entry name" value="LRR"/>
    <property type="match status" value="4"/>
</dbReference>
<organism>
    <name type="scientific">Homo sapiens</name>
    <name type="common">Human</name>
    <dbReference type="NCBI Taxonomy" id="9606"/>
    <lineage>
        <taxon>Eukaryota</taxon>
        <taxon>Metazoa</taxon>
        <taxon>Chordata</taxon>
        <taxon>Craniata</taxon>
        <taxon>Vertebrata</taxon>
        <taxon>Euteleostomi</taxon>
        <taxon>Mammalia</taxon>
        <taxon>Eutheria</taxon>
        <taxon>Euarchontoglires</taxon>
        <taxon>Primates</taxon>
        <taxon>Haplorrhini</taxon>
        <taxon>Catarrhini</taxon>
        <taxon>Hominidae</taxon>
        <taxon>Homo</taxon>
    </lineage>
</organism>
<feature type="chain" id="PRO_0000137598" description="Acidic leucine-rich nuclear phosphoprotein 32 family member D">
    <location>
        <begin position="1"/>
        <end position="131"/>
    </location>
</feature>
<feature type="repeat" description="LRR 1">
    <location>
        <begin position="18"/>
        <end position="38"/>
    </location>
</feature>
<feature type="repeat" description="LRR 2">
    <location>
        <begin position="43"/>
        <end position="64"/>
    </location>
</feature>
<feature type="repeat" description="LRR 3">
    <location>
        <begin position="65"/>
        <end position="87"/>
    </location>
</feature>
<feature type="repeat" description="LRR 4">
    <location>
        <begin position="89"/>
        <end position="110"/>
    </location>
</feature>
<feature type="repeat" description="LRR 5">
    <location>
        <begin position="114"/>
        <end position="131"/>
    </location>
</feature>
<feature type="sequence variant" id="VAR_027832" description="In dbSNP:rs7956679.">
    <original>L</original>
    <variation>F</variation>
    <location>
        <position position="46"/>
    </location>
</feature>
<feature type="sequence conflict" description="In Ref. 1; AAD13667." evidence="1" ref="1">
    <original>T</original>
    <variation>A</variation>
    <location>
        <position position="38"/>
    </location>
</feature>
<feature type="sequence conflict" description="In Ref. 1; AAD13667." evidence="1" ref="1">
    <original>T</original>
    <variation>S</variation>
    <location>
        <position position="55"/>
    </location>
</feature>
<comment type="similarity">
    <text evidence="1">Belongs to the ANP32 family.</text>
</comment>
<proteinExistence type="evidence at protein level"/>
<name>AN32D_HUMAN</name>
<keyword id="KW-0433">Leucine-rich repeat</keyword>
<keyword id="KW-1267">Proteomics identification</keyword>
<keyword id="KW-1185">Reference proteome</keyword>
<keyword id="KW-0677">Repeat</keyword>